<name>HIP_MYTED</name>
<feature type="chain" id="PRO_0000143959" description="Heavy metal-binding protein HIP">
    <location>
        <begin position="1"/>
        <end position="213"/>
    </location>
</feature>
<feature type="domain" description="C1q" evidence="1">
    <location>
        <begin position="80"/>
        <end position="213"/>
    </location>
</feature>
<comment type="function">
    <text evidence="2 3">Binds heavy metals. May function as a carrier of divalent cations in plasma.</text>
</comment>
<comment type="subcellular location">
    <subcellularLocation>
        <location>Secreted</location>
    </subcellularLocation>
</comment>
<comment type="tissue specificity">
    <text evidence="2 3">Pallium, gill and liver.</text>
</comment>
<sequence>NPVDDHQNDDHHDAPIVGHHDAFLKAEFDLTSLNADLEKFIHHEIEKEIHDVENHTEHNKHEIDALHLEIKQLHEEVEYFKSHHVAFSAELTHPIENLGAEEIAHFDKVRVNSGDAYHVDTGKFVAPEEGFFYFSVTICTKRDSILEMALHVNDHDEMIIHADAEHLELGCASNSEIVHLQKGDHVEVVKHGADGVPPFYIHTMSTFTGFMLH</sequence>
<accession>P83425</accession>
<organism evidence="3">
    <name type="scientific">Mytilus edulis</name>
    <name type="common">Blue mussel</name>
    <dbReference type="NCBI Taxonomy" id="6550"/>
    <lineage>
        <taxon>Eukaryota</taxon>
        <taxon>Metazoa</taxon>
        <taxon>Spiralia</taxon>
        <taxon>Lophotrochozoa</taxon>
        <taxon>Mollusca</taxon>
        <taxon>Bivalvia</taxon>
        <taxon>Autobranchia</taxon>
        <taxon>Pteriomorphia</taxon>
        <taxon>Mytilida</taxon>
        <taxon>Mytiloidea</taxon>
        <taxon>Mytilidae</taxon>
        <taxon>Mytilinae</taxon>
        <taxon>Mytilus</taxon>
    </lineage>
</organism>
<protein>
    <recommendedName>
        <fullName>Heavy metal-binding protein HIP</fullName>
    </recommendedName>
</protein>
<dbReference type="SMR" id="P83425"/>
<dbReference type="GO" id="GO:0005576">
    <property type="term" value="C:extracellular region"/>
    <property type="evidence" value="ECO:0007669"/>
    <property type="project" value="UniProtKB-SubCell"/>
</dbReference>
<dbReference type="GO" id="GO:0046872">
    <property type="term" value="F:metal ion binding"/>
    <property type="evidence" value="ECO:0007669"/>
    <property type="project" value="UniProtKB-KW"/>
</dbReference>
<dbReference type="Gene3D" id="2.60.120.40">
    <property type="match status" value="1"/>
</dbReference>
<dbReference type="InterPro" id="IPR001073">
    <property type="entry name" value="C1q_dom"/>
</dbReference>
<dbReference type="InterPro" id="IPR050392">
    <property type="entry name" value="Collagen/C1q_domain"/>
</dbReference>
<dbReference type="InterPro" id="IPR008983">
    <property type="entry name" value="Tumour_necrosis_fac-like_dom"/>
</dbReference>
<dbReference type="PANTHER" id="PTHR15427:SF50">
    <property type="entry name" value="COMPLEMENT C1Q TUMOR NECROSIS FACTOR-RELATED PROTEIN 2-LIKE"/>
    <property type="match status" value="1"/>
</dbReference>
<dbReference type="PANTHER" id="PTHR15427">
    <property type="entry name" value="EMILIN ELASTIN MICROFIBRIL INTERFACE-LOCATED PROTEIN ELASTIN MICROFIBRIL INTERFACER"/>
    <property type="match status" value="1"/>
</dbReference>
<dbReference type="Pfam" id="PF00386">
    <property type="entry name" value="C1q"/>
    <property type="match status" value="1"/>
</dbReference>
<dbReference type="PRINTS" id="PR00007">
    <property type="entry name" value="COMPLEMNTC1Q"/>
</dbReference>
<dbReference type="SMART" id="SM00110">
    <property type="entry name" value="C1Q"/>
    <property type="match status" value="1"/>
</dbReference>
<dbReference type="SUPFAM" id="SSF49842">
    <property type="entry name" value="TNF-like"/>
    <property type="match status" value="1"/>
</dbReference>
<dbReference type="PROSITE" id="PS50871">
    <property type="entry name" value="C1Q"/>
    <property type="match status" value="1"/>
</dbReference>
<proteinExistence type="evidence at protein level"/>
<keyword id="KW-0104">Cadmium</keyword>
<keyword id="KW-0186">Copper</keyword>
<keyword id="KW-0903">Direct protein sequencing</keyword>
<keyword id="KW-0479">Metal-binding</keyword>
<keyword id="KW-0964">Secreted</keyword>
<keyword id="KW-0862">Zinc</keyword>
<evidence type="ECO:0000255" key="1">
    <source>
        <dbReference type="PROSITE-ProRule" id="PRU00368"/>
    </source>
</evidence>
<evidence type="ECO:0000269" key="2">
    <source ref="1"/>
</evidence>
<evidence type="ECO:0000305" key="3"/>
<reference evidence="3" key="1">
    <citation type="submission" date="2002-07" db="UniProtKB">
        <authorList>
            <person name="Schneeweiss H."/>
            <person name="Schmalmack W."/>
            <person name="Luedeking A."/>
            <person name="Jarck F."/>
            <person name="Behlich L.-K."/>
            <person name="Buck F."/>
        </authorList>
    </citation>
    <scope>PROTEIN SEQUENCE</scope>
    <scope>FUNCTION</scope>
    <scope>TISSUE SPECIFICITY</scope>
    <source>
        <tissue>Plasma</tissue>
    </source>
</reference>